<evidence type="ECO:0000255" key="1">
    <source>
        <dbReference type="HAMAP-Rule" id="MF_01466"/>
    </source>
</evidence>
<evidence type="ECO:0000269" key="2">
    <source>
    </source>
</evidence>
<evidence type="ECO:0000269" key="3">
    <source>
    </source>
</evidence>
<evidence type="ECO:0000305" key="4"/>
<comment type="function">
    <text evidence="2 3 4">The central subunit of a protein translocation channel (Potential). Part of the accessory SecA2/SecY2 system specifically required to export SraP, a serine-rich repeat cell wall protein encoded upstream in the same operon.</text>
</comment>
<comment type="subunit">
    <text evidence="4">May form heterotrimers with SecE and SecG subunits (Potential). Component of the accessory SecA2/SecY2 protein translocase complex required to export cell wall protein SrpA.</text>
</comment>
<comment type="subcellular location">
    <subcellularLocation>
        <location evidence="1">Cell membrane</location>
        <topology evidence="1">Multi-pass membrane protein</topology>
    </subcellularLocation>
</comment>
<comment type="disruption phenotype">
    <text evidence="2 3">No effect on cell growth, significantly reduces export of the cell wall protein SraP. The small amount that is exported seems to be glycosylated normally. A double secG/secY2 mutant enters stationary phase earlier and has significant differences in the export pattern of a number of extracellular proteins (shown in RN4220). Single or double deletions are as virulent as wild-type (shown in RN4220 and SH1000).</text>
</comment>
<comment type="similarity">
    <text evidence="1">Belongs to the SecY/SEC61-alpha family. SecY2 subfamily.</text>
</comment>
<name>SECY2_STAA8</name>
<sequence length="403" mass="46885">MLKLLQQYEYKIIYKRMLYTCFILFIYILGTNISIVSYNDMQVKHESFFKIAISNMGGDVNTLNIFTLGLGPWLTSMIILMLISYRNMDKYMKQTSLEKHYKERILTLILSVIQSYFVIHEYVSKERVHQDNIYLTILILVTGTMLLVWLADKNSRYGIAGPMPIVMVSIIKSMMHQKMEYIDASHIVIALLIILVIITLFILLFIELVEVRIPYIDLMNVSATNMKSYLSWKVNPAGSITLMMSISAFVFLKSGIHFILSMFNKSISDDMPMLTFDSPVGISVYLVIQMLLGYFLSRFLINTKQKSKDFLKSGNYFSGVKPGKDTERYLNYQARRVCWFGLALVTVIIGIPLYFTLFVPHLSTEIYFSVQLIVLVYISINIAETIRTYLYFDKYKPFLNQYW</sequence>
<accession>Q2FUW2</accession>
<feature type="chain" id="PRO_0000414207" description="Accessory Sec system protein translocase subunit SecY2">
    <location>
        <begin position="1"/>
        <end position="403"/>
    </location>
</feature>
<feature type="transmembrane region" description="Helical" evidence="1">
    <location>
        <begin position="17"/>
        <end position="37"/>
    </location>
</feature>
<feature type="transmembrane region" description="Helical" evidence="1">
    <location>
        <begin position="63"/>
        <end position="83"/>
    </location>
</feature>
<feature type="transmembrane region" description="Helical" evidence="1">
    <location>
        <begin position="105"/>
        <end position="125"/>
    </location>
</feature>
<feature type="transmembrane region" description="Helical" evidence="1">
    <location>
        <begin position="131"/>
        <end position="151"/>
    </location>
</feature>
<feature type="transmembrane region" description="Helical" evidence="1">
    <location>
        <begin position="157"/>
        <end position="177"/>
    </location>
</feature>
<feature type="transmembrane region" description="Helical" evidence="1">
    <location>
        <begin position="186"/>
        <end position="206"/>
    </location>
</feature>
<feature type="transmembrane region" description="Helical" evidence="1">
    <location>
        <begin position="240"/>
        <end position="260"/>
    </location>
</feature>
<feature type="transmembrane region" description="Helical" evidence="1">
    <location>
        <begin position="276"/>
        <end position="296"/>
    </location>
</feature>
<feature type="transmembrane region" description="Helical" evidence="1">
    <location>
        <begin position="339"/>
        <end position="359"/>
    </location>
</feature>
<feature type="transmembrane region" description="Helical" evidence="1">
    <location>
        <begin position="366"/>
        <end position="386"/>
    </location>
</feature>
<organism>
    <name type="scientific">Staphylococcus aureus (strain NCTC 8325 / PS 47)</name>
    <dbReference type="NCBI Taxonomy" id="93061"/>
    <lineage>
        <taxon>Bacteria</taxon>
        <taxon>Bacillati</taxon>
        <taxon>Bacillota</taxon>
        <taxon>Bacilli</taxon>
        <taxon>Bacillales</taxon>
        <taxon>Staphylococcaceae</taxon>
        <taxon>Staphylococcus</taxon>
    </lineage>
</organism>
<reference key="1">
    <citation type="book" date="2006" name="Gram positive pathogens, 2nd edition">
        <title>The Staphylococcus aureus NCTC 8325 genome.</title>
        <editorList>
            <person name="Fischetti V."/>
            <person name="Novick R."/>
            <person name="Ferretti J."/>
            <person name="Portnoy D."/>
            <person name="Rood J."/>
        </editorList>
        <authorList>
            <person name="Gillaspy A.F."/>
            <person name="Worrell V."/>
            <person name="Orvis J."/>
            <person name="Roe B.A."/>
            <person name="Dyer D.W."/>
            <person name="Iandolo J.J."/>
        </authorList>
    </citation>
    <scope>NUCLEOTIDE SEQUENCE [LARGE SCALE GENOMIC DNA]</scope>
    <source>
        <strain>NCTC 8325 / PS 47</strain>
    </source>
</reference>
<reference key="2">
    <citation type="journal article" date="2008" name="J. Bacteriol.">
        <title>Characterization of the accessory Sec system of Staphylococcus aureus.</title>
        <authorList>
            <person name="Siboo I.R."/>
            <person name="Chaffin D.O."/>
            <person name="Rubens C.E."/>
            <person name="Sullam P.M."/>
        </authorList>
    </citation>
    <scope>FUNCTION</scope>
    <scope>DISRUPTION PHENOTYPE</scope>
    <source>
        <strain>ISP479C</strain>
    </source>
</reference>
<reference key="3">
    <citation type="journal article" date="2010" name="J. Bacteriol.">
        <title>Synthetic effects of secG and secY2 mutations on exoproteome biogenesis in Staphylococcus aureus.</title>
        <authorList>
            <person name="Sibbald M.J."/>
            <person name="Winter T."/>
            <person name="van der Kooi-Pol M.M."/>
            <person name="Buist G."/>
            <person name="Tsompanidou E."/>
            <person name="Bosma T."/>
            <person name="Schafer T."/>
            <person name="Ohlsen K."/>
            <person name="Hecker M."/>
            <person name="Antelmann H."/>
            <person name="Engelmann S."/>
            <person name="van Dijl J.M."/>
        </authorList>
    </citation>
    <scope>FUNCTION</scope>
    <scope>DISRUPTION PHENOTYPE</scope>
    <source>
        <strain>RN4220</strain>
        <strain>SH1000</strain>
    </source>
</reference>
<dbReference type="EMBL" id="CP000253">
    <property type="protein sequence ID" value="ABD31976.1"/>
    <property type="molecule type" value="Genomic_DNA"/>
</dbReference>
<dbReference type="RefSeq" id="WP_000916119.1">
    <property type="nucleotide sequence ID" value="NZ_LS483365.1"/>
</dbReference>
<dbReference type="SMR" id="Q2FUW2"/>
<dbReference type="STRING" id="93061.SAOUHSC_02989"/>
<dbReference type="PaxDb" id="1280-SAXN108_2924"/>
<dbReference type="KEGG" id="sao:SAOUHSC_02989"/>
<dbReference type="PATRIC" id="fig|93061.5.peg.2696"/>
<dbReference type="eggNOG" id="COG0201">
    <property type="taxonomic scope" value="Bacteria"/>
</dbReference>
<dbReference type="HOGENOM" id="CLU_030313_4_0_9"/>
<dbReference type="OrthoDB" id="2055747at2"/>
<dbReference type="PRO" id="PR:Q2FUW2"/>
<dbReference type="Proteomes" id="UP000008816">
    <property type="component" value="Chromosome"/>
</dbReference>
<dbReference type="GO" id="GO:0031522">
    <property type="term" value="C:cell envelope Sec protein transport complex"/>
    <property type="evidence" value="ECO:0000318"/>
    <property type="project" value="GO_Central"/>
</dbReference>
<dbReference type="GO" id="GO:0005886">
    <property type="term" value="C:plasma membrane"/>
    <property type="evidence" value="ECO:0000318"/>
    <property type="project" value="GO_Central"/>
</dbReference>
<dbReference type="GO" id="GO:0008320">
    <property type="term" value="F:protein transmembrane transporter activity"/>
    <property type="evidence" value="ECO:0000318"/>
    <property type="project" value="GO_Central"/>
</dbReference>
<dbReference type="GO" id="GO:0005048">
    <property type="term" value="F:signal sequence binding"/>
    <property type="evidence" value="ECO:0000318"/>
    <property type="project" value="GO_Central"/>
</dbReference>
<dbReference type="GO" id="GO:0006616">
    <property type="term" value="P:SRP-dependent cotranslational protein targeting to membrane, translocation"/>
    <property type="evidence" value="ECO:0000318"/>
    <property type="project" value="GO_Central"/>
</dbReference>
<dbReference type="FunFam" id="1.10.3370.10:FF:000015">
    <property type="entry name" value="Accessory Sec system protein translocase subunit SecY2"/>
    <property type="match status" value="1"/>
</dbReference>
<dbReference type="Gene3D" id="1.10.3370.10">
    <property type="entry name" value="SecY subunit domain"/>
    <property type="match status" value="1"/>
</dbReference>
<dbReference type="HAMAP" id="MF_01466">
    <property type="entry name" value="SecY2"/>
    <property type="match status" value="1"/>
</dbReference>
<dbReference type="InterPro" id="IPR002208">
    <property type="entry name" value="SecY/SEC61-alpha"/>
</dbReference>
<dbReference type="InterPro" id="IPR014269">
    <property type="entry name" value="SecY2"/>
</dbReference>
<dbReference type="InterPro" id="IPR023201">
    <property type="entry name" value="SecY_dom_sf"/>
</dbReference>
<dbReference type="NCBIfam" id="TIGR02920">
    <property type="entry name" value="acc_sec_Y2"/>
    <property type="match status" value="1"/>
</dbReference>
<dbReference type="NCBIfam" id="NF009082">
    <property type="entry name" value="PRK12417.1"/>
    <property type="match status" value="1"/>
</dbReference>
<dbReference type="Pfam" id="PF00344">
    <property type="entry name" value="SecY"/>
    <property type="match status" value="1"/>
</dbReference>
<dbReference type="PIRSF" id="PIRSF004557">
    <property type="entry name" value="SecY"/>
    <property type="match status" value="1"/>
</dbReference>
<dbReference type="PRINTS" id="PR00303">
    <property type="entry name" value="SECYTRNLCASE"/>
</dbReference>
<dbReference type="SUPFAM" id="SSF103491">
    <property type="entry name" value="Preprotein translocase SecY subunit"/>
    <property type="match status" value="1"/>
</dbReference>
<protein>
    <recommendedName>
        <fullName evidence="1">Accessory Sec system protein translocase subunit SecY2</fullName>
    </recommendedName>
</protein>
<gene>
    <name evidence="1" type="primary">secY2</name>
    <name type="ordered locus">SAOUHSC_02989</name>
</gene>
<proteinExistence type="inferred from homology"/>
<keyword id="KW-1003">Cell membrane</keyword>
<keyword id="KW-0472">Membrane</keyword>
<keyword id="KW-0653">Protein transport</keyword>
<keyword id="KW-1185">Reference proteome</keyword>
<keyword id="KW-0811">Translocation</keyword>
<keyword id="KW-0812">Transmembrane</keyword>
<keyword id="KW-1133">Transmembrane helix</keyword>
<keyword id="KW-0813">Transport</keyword>